<reference key="1">
    <citation type="journal article" date="2009" name="J. Bacteriol.">
        <title>Complete genome sequence and comparative genome analysis of enteropathogenic Escherichia coli O127:H6 strain E2348/69.</title>
        <authorList>
            <person name="Iguchi A."/>
            <person name="Thomson N.R."/>
            <person name="Ogura Y."/>
            <person name="Saunders D."/>
            <person name="Ooka T."/>
            <person name="Henderson I.R."/>
            <person name="Harris D."/>
            <person name="Asadulghani M."/>
            <person name="Kurokawa K."/>
            <person name="Dean P."/>
            <person name="Kenny B."/>
            <person name="Quail M.A."/>
            <person name="Thurston S."/>
            <person name="Dougan G."/>
            <person name="Hayashi T."/>
            <person name="Parkhill J."/>
            <person name="Frankel G."/>
        </authorList>
    </citation>
    <scope>NUCLEOTIDE SEQUENCE [LARGE SCALE GENOMIC DNA]</scope>
    <source>
        <strain>E2348/69 / EPEC</strain>
    </source>
</reference>
<name>RECX_ECO27</name>
<proteinExistence type="inferred from homology"/>
<organism>
    <name type="scientific">Escherichia coli O127:H6 (strain E2348/69 / EPEC)</name>
    <dbReference type="NCBI Taxonomy" id="574521"/>
    <lineage>
        <taxon>Bacteria</taxon>
        <taxon>Pseudomonadati</taxon>
        <taxon>Pseudomonadota</taxon>
        <taxon>Gammaproteobacteria</taxon>
        <taxon>Enterobacterales</taxon>
        <taxon>Enterobacteriaceae</taxon>
        <taxon>Escherichia</taxon>
    </lineage>
</organism>
<keyword id="KW-0963">Cytoplasm</keyword>
<keyword id="KW-1185">Reference proteome</keyword>
<gene>
    <name evidence="1" type="primary">recX</name>
    <name type="ordered locus">E2348C_2961</name>
</gene>
<protein>
    <recommendedName>
        <fullName evidence="1">Regulatory protein RecX</fullName>
    </recommendedName>
</protein>
<feature type="chain" id="PRO_1000164015" description="Regulatory protein RecX">
    <location>
        <begin position="1"/>
        <end position="166"/>
    </location>
</feature>
<comment type="function">
    <text evidence="1">Modulates RecA activity.</text>
</comment>
<comment type="subcellular location">
    <subcellularLocation>
        <location evidence="1">Cytoplasm</location>
    </subcellularLocation>
</comment>
<comment type="similarity">
    <text evidence="1">Belongs to the RecX family.</text>
</comment>
<evidence type="ECO:0000255" key="1">
    <source>
        <dbReference type="HAMAP-Rule" id="MF_01114"/>
    </source>
</evidence>
<accession>B7UHB6</accession>
<dbReference type="EMBL" id="FM180568">
    <property type="protein sequence ID" value="CAS10509.1"/>
    <property type="molecule type" value="Genomic_DNA"/>
</dbReference>
<dbReference type="RefSeq" id="WP_000140506.1">
    <property type="nucleotide sequence ID" value="NC_011601.1"/>
</dbReference>
<dbReference type="SMR" id="B7UHB6"/>
<dbReference type="GeneID" id="75172780"/>
<dbReference type="KEGG" id="ecg:E2348C_2961"/>
<dbReference type="HOGENOM" id="CLU_066607_3_2_6"/>
<dbReference type="Proteomes" id="UP000008205">
    <property type="component" value="Chromosome"/>
</dbReference>
<dbReference type="GO" id="GO:0005737">
    <property type="term" value="C:cytoplasm"/>
    <property type="evidence" value="ECO:0007669"/>
    <property type="project" value="UniProtKB-SubCell"/>
</dbReference>
<dbReference type="GO" id="GO:0006282">
    <property type="term" value="P:regulation of DNA repair"/>
    <property type="evidence" value="ECO:0007669"/>
    <property type="project" value="UniProtKB-UniRule"/>
</dbReference>
<dbReference type="FunFam" id="1.10.10.10:FF:000133">
    <property type="entry name" value="Regulatory protein RecX"/>
    <property type="match status" value="1"/>
</dbReference>
<dbReference type="FunFam" id="1.10.10.10:FF:000134">
    <property type="entry name" value="Regulatory protein RecX"/>
    <property type="match status" value="1"/>
</dbReference>
<dbReference type="FunFam" id="1.10.10.10:FF:000209">
    <property type="entry name" value="Regulatory protein RecX"/>
    <property type="match status" value="1"/>
</dbReference>
<dbReference type="Gene3D" id="1.10.10.10">
    <property type="entry name" value="Winged helix-like DNA-binding domain superfamily/Winged helix DNA-binding domain"/>
    <property type="match status" value="3"/>
</dbReference>
<dbReference type="HAMAP" id="MF_01114">
    <property type="entry name" value="RecX"/>
    <property type="match status" value="1"/>
</dbReference>
<dbReference type="InterPro" id="IPR053926">
    <property type="entry name" value="RecX_HTH_1st"/>
</dbReference>
<dbReference type="InterPro" id="IPR053924">
    <property type="entry name" value="RecX_HTH_2nd"/>
</dbReference>
<dbReference type="InterPro" id="IPR053925">
    <property type="entry name" value="RecX_HTH_3rd"/>
</dbReference>
<dbReference type="InterPro" id="IPR003783">
    <property type="entry name" value="Regulatory_RecX"/>
</dbReference>
<dbReference type="InterPro" id="IPR036388">
    <property type="entry name" value="WH-like_DNA-bd_sf"/>
</dbReference>
<dbReference type="NCBIfam" id="NF001052">
    <property type="entry name" value="PRK00117.1-1"/>
    <property type="match status" value="1"/>
</dbReference>
<dbReference type="PANTHER" id="PTHR33602">
    <property type="entry name" value="REGULATORY PROTEIN RECX FAMILY PROTEIN"/>
    <property type="match status" value="1"/>
</dbReference>
<dbReference type="PANTHER" id="PTHR33602:SF1">
    <property type="entry name" value="REGULATORY PROTEIN RECX FAMILY PROTEIN"/>
    <property type="match status" value="1"/>
</dbReference>
<dbReference type="Pfam" id="PF21982">
    <property type="entry name" value="RecX_HTH1"/>
    <property type="match status" value="1"/>
</dbReference>
<dbReference type="Pfam" id="PF02631">
    <property type="entry name" value="RecX_HTH2"/>
    <property type="match status" value="1"/>
</dbReference>
<dbReference type="Pfam" id="PF21981">
    <property type="entry name" value="RecX_HTH3"/>
    <property type="match status" value="1"/>
</dbReference>
<sequence>MTESTSRRPAYARLLDRAVRILAVRDHSEQELRRKLAAPIMGKNGPEEIDATAEDYERVIAWCHEHGYLDDSRFVARFIASRSRKGYGPARIRQELNQKGISREATEKAMRECDIDWCALARDQATRKYGEPLPTVFSEKVKIQRFLLYRGYLMEDIQDIWRNFAD</sequence>